<organism>
    <name type="scientific">Mus musculus</name>
    <name type="common">Mouse</name>
    <dbReference type="NCBI Taxonomy" id="10090"/>
    <lineage>
        <taxon>Eukaryota</taxon>
        <taxon>Metazoa</taxon>
        <taxon>Chordata</taxon>
        <taxon>Craniata</taxon>
        <taxon>Vertebrata</taxon>
        <taxon>Euteleostomi</taxon>
        <taxon>Mammalia</taxon>
        <taxon>Eutheria</taxon>
        <taxon>Euarchontoglires</taxon>
        <taxon>Glires</taxon>
        <taxon>Rodentia</taxon>
        <taxon>Myomorpha</taxon>
        <taxon>Muroidea</taxon>
        <taxon>Muridae</taxon>
        <taxon>Murinae</taxon>
        <taxon>Mus</taxon>
        <taxon>Mus</taxon>
    </lineage>
</organism>
<reference key="1">
    <citation type="journal article" date="1997" name="Cancer Res.">
        <title>AAC-11, a novel cDNA that inhibits apoptosis after growth factor withdrawal.</title>
        <authorList>
            <person name="Tewari M."/>
            <person name="Yu M."/>
            <person name="Ross B."/>
            <person name="Dean C."/>
            <person name="Giordano A."/>
            <person name="Rubin R."/>
        </authorList>
    </citation>
    <scope>NUCLEOTIDE SEQUENCE [MRNA]</scope>
    <source>
        <strain>BALB/cJ</strain>
    </source>
</reference>
<reference key="2">
    <citation type="journal article" date="2005" name="Science">
        <title>The transcriptional landscape of the mammalian genome.</title>
        <authorList>
            <person name="Carninci P."/>
            <person name="Kasukawa T."/>
            <person name="Katayama S."/>
            <person name="Gough J."/>
            <person name="Frith M.C."/>
            <person name="Maeda N."/>
            <person name="Oyama R."/>
            <person name="Ravasi T."/>
            <person name="Lenhard B."/>
            <person name="Wells C."/>
            <person name="Kodzius R."/>
            <person name="Shimokawa K."/>
            <person name="Bajic V.B."/>
            <person name="Brenner S.E."/>
            <person name="Batalov S."/>
            <person name="Forrest A.R."/>
            <person name="Zavolan M."/>
            <person name="Davis M.J."/>
            <person name="Wilming L.G."/>
            <person name="Aidinis V."/>
            <person name="Allen J.E."/>
            <person name="Ambesi-Impiombato A."/>
            <person name="Apweiler R."/>
            <person name="Aturaliya R.N."/>
            <person name="Bailey T.L."/>
            <person name="Bansal M."/>
            <person name="Baxter L."/>
            <person name="Beisel K.W."/>
            <person name="Bersano T."/>
            <person name="Bono H."/>
            <person name="Chalk A.M."/>
            <person name="Chiu K.P."/>
            <person name="Choudhary V."/>
            <person name="Christoffels A."/>
            <person name="Clutterbuck D.R."/>
            <person name="Crowe M.L."/>
            <person name="Dalla E."/>
            <person name="Dalrymple B.P."/>
            <person name="de Bono B."/>
            <person name="Della Gatta G."/>
            <person name="di Bernardo D."/>
            <person name="Down T."/>
            <person name="Engstrom P."/>
            <person name="Fagiolini M."/>
            <person name="Faulkner G."/>
            <person name="Fletcher C.F."/>
            <person name="Fukushima T."/>
            <person name="Furuno M."/>
            <person name="Futaki S."/>
            <person name="Gariboldi M."/>
            <person name="Georgii-Hemming P."/>
            <person name="Gingeras T.R."/>
            <person name="Gojobori T."/>
            <person name="Green R.E."/>
            <person name="Gustincich S."/>
            <person name="Harbers M."/>
            <person name="Hayashi Y."/>
            <person name="Hensch T.K."/>
            <person name="Hirokawa N."/>
            <person name="Hill D."/>
            <person name="Huminiecki L."/>
            <person name="Iacono M."/>
            <person name="Ikeo K."/>
            <person name="Iwama A."/>
            <person name="Ishikawa T."/>
            <person name="Jakt M."/>
            <person name="Kanapin A."/>
            <person name="Katoh M."/>
            <person name="Kawasawa Y."/>
            <person name="Kelso J."/>
            <person name="Kitamura H."/>
            <person name="Kitano H."/>
            <person name="Kollias G."/>
            <person name="Krishnan S.P."/>
            <person name="Kruger A."/>
            <person name="Kummerfeld S.K."/>
            <person name="Kurochkin I.V."/>
            <person name="Lareau L.F."/>
            <person name="Lazarevic D."/>
            <person name="Lipovich L."/>
            <person name="Liu J."/>
            <person name="Liuni S."/>
            <person name="McWilliam S."/>
            <person name="Madan Babu M."/>
            <person name="Madera M."/>
            <person name="Marchionni L."/>
            <person name="Matsuda H."/>
            <person name="Matsuzawa S."/>
            <person name="Miki H."/>
            <person name="Mignone F."/>
            <person name="Miyake S."/>
            <person name="Morris K."/>
            <person name="Mottagui-Tabar S."/>
            <person name="Mulder N."/>
            <person name="Nakano N."/>
            <person name="Nakauchi H."/>
            <person name="Ng P."/>
            <person name="Nilsson R."/>
            <person name="Nishiguchi S."/>
            <person name="Nishikawa S."/>
            <person name="Nori F."/>
            <person name="Ohara O."/>
            <person name="Okazaki Y."/>
            <person name="Orlando V."/>
            <person name="Pang K.C."/>
            <person name="Pavan W.J."/>
            <person name="Pavesi G."/>
            <person name="Pesole G."/>
            <person name="Petrovsky N."/>
            <person name="Piazza S."/>
            <person name="Reed J."/>
            <person name="Reid J.F."/>
            <person name="Ring B.Z."/>
            <person name="Ringwald M."/>
            <person name="Rost B."/>
            <person name="Ruan Y."/>
            <person name="Salzberg S.L."/>
            <person name="Sandelin A."/>
            <person name="Schneider C."/>
            <person name="Schoenbach C."/>
            <person name="Sekiguchi K."/>
            <person name="Semple C.A."/>
            <person name="Seno S."/>
            <person name="Sessa L."/>
            <person name="Sheng Y."/>
            <person name="Shibata Y."/>
            <person name="Shimada H."/>
            <person name="Shimada K."/>
            <person name="Silva D."/>
            <person name="Sinclair B."/>
            <person name="Sperling S."/>
            <person name="Stupka E."/>
            <person name="Sugiura K."/>
            <person name="Sultana R."/>
            <person name="Takenaka Y."/>
            <person name="Taki K."/>
            <person name="Tammoja K."/>
            <person name="Tan S.L."/>
            <person name="Tang S."/>
            <person name="Taylor M.S."/>
            <person name="Tegner J."/>
            <person name="Teichmann S.A."/>
            <person name="Ueda H.R."/>
            <person name="van Nimwegen E."/>
            <person name="Verardo R."/>
            <person name="Wei C.L."/>
            <person name="Yagi K."/>
            <person name="Yamanishi H."/>
            <person name="Zabarovsky E."/>
            <person name="Zhu S."/>
            <person name="Zimmer A."/>
            <person name="Hide W."/>
            <person name="Bult C."/>
            <person name="Grimmond S.M."/>
            <person name="Teasdale R.D."/>
            <person name="Liu E.T."/>
            <person name="Brusic V."/>
            <person name="Quackenbush J."/>
            <person name="Wahlestedt C."/>
            <person name="Mattick J.S."/>
            <person name="Hume D.A."/>
            <person name="Kai C."/>
            <person name="Sasaki D."/>
            <person name="Tomaru Y."/>
            <person name="Fukuda S."/>
            <person name="Kanamori-Katayama M."/>
            <person name="Suzuki M."/>
            <person name="Aoki J."/>
            <person name="Arakawa T."/>
            <person name="Iida J."/>
            <person name="Imamura K."/>
            <person name="Itoh M."/>
            <person name="Kato T."/>
            <person name="Kawaji H."/>
            <person name="Kawagashira N."/>
            <person name="Kawashima T."/>
            <person name="Kojima M."/>
            <person name="Kondo S."/>
            <person name="Konno H."/>
            <person name="Nakano K."/>
            <person name="Ninomiya N."/>
            <person name="Nishio T."/>
            <person name="Okada M."/>
            <person name="Plessy C."/>
            <person name="Shibata K."/>
            <person name="Shiraki T."/>
            <person name="Suzuki S."/>
            <person name="Tagami M."/>
            <person name="Waki K."/>
            <person name="Watahiki A."/>
            <person name="Okamura-Oho Y."/>
            <person name="Suzuki H."/>
            <person name="Kawai J."/>
            <person name="Hayashizaki Y."/>
        </authorList>
    </citation>
    <scope>NUCLEOTIDE SEQUENCE [LARGE SCALE MRNA]</scope>
    <source>
        <strain>C57BL/6J</strain>
        <strain>NOD</strain>
        <tissue>Bone</tissue>
        <tissue>Placenta</tissue>
        <tissue>Thymus</tissue>
    </source>
</reference>
<reference key="3">
    <citation type="journal article" date="2009" name="PLoS Biol.">
        <title>Lineage-specific biology revealed by a finished genome assembly of the mouse.</title>
        <authorList>
            <person name="Church D.M."/>
            <person name="Goodstadt L."/>
            <person name="Hillier L.W."/>
            <person name="Zody M.C."/>
            <person name="Goldstein S."/>
            <person name="She X."/>
            <person name="Bult C.J."/>
            <person name="Agarwala R."/>
            <person name="Cherry J.L."/>
            <person name="DiCuccio M."/>
            <person name="Hlavina W."/>
            <person name="Kapustin Y."/>
            <person name="Meric P."/>
            <person name="Maglott D."/>
            <person name="Birtle Z."/>
            <person name="Marques A.C."/>
            <person name="Graves T."/>
            <person name="Zhou S."/>
            <person name="Teague B."/>
            <person name="Potamousis K."/>
            <person name="Churas C."/>
            <person name="Place M."/>
            <person name="Herschleb J."/>
            <person name="Runnheim R."/>
            <person name="Forrest D."/>
            <person name="Amos-Landgraf J."/>
            <person name="Schwartz D.C."/>
            <person name="Cheng Z."/>
            <person name="Lindblad-Toh K."/>
            <person name="Eichler E.E."/>
            <person name="Ponting C.P."/>
        </authorList>
    </citation>
    <scope>NUCLEOTIDE SEQUENCE [LARGE SCALE GENOMIC DNA]</scope>
    <source>
        <strain>C57BL/6J</strain>
    </source>
</reference>
<reference key="4">
    <citation type="submission" date="2005-07" db="EMBL/GenBank/DDBJ databases">
        <authorList>
            <person name="Mural R.J."/>
            <person name="Adams M.D."/>
            <person name="Myers E.W."/>
            <person name="Smith H.O."/>
            <person name="Venter J.C."/>
        </authorList>
    </citation>
    <scope>NUCLEOTIDE SEQUENCE [LARGE SCALE GENOMIC DNA]</scope>
</reference>
<reference key="5">
    <citation type="journal article" date="2004" name="Genome Res.">
        <title>The status, quality, and expansion of the NIH full-length cDNA project: the Mammalian Gene Collection (MGC).</title>
        <authorList>
            <consortium name="The MGC Project Team"/>
        </authorList>
    </citation>
    <scope>NUCLEOTIDE SEQUENCE [LARGE SCALE MRNA]</scope>
    <source>
        <strain>FVB/N</strain>
        <tissue>Mammary gland</tissue>
    </source>
</reference>
<reference key="6">
    <citation type="journal article" date="1998" name="Biochem. Biophys. Res. Commun.">
        <title>Identification of genes differentially expressed in vascular smooth muscle cells following benzo[a]pyrene challenge: implications for chemical atherogenesis.</title>
        <authorList>
            <person name="Lu K.P."/>
            <person name="Ramos K.S."/>
        </authorList>
    </citation>
    <scope>INDUCTION BY BAP</scope>
</reference>
<reference key="7">
    <citation type="journal article" date="2009" name="Immunity">
        <title>The phagosomal proteome in interferon-gamma-activated macrophages.</title>
        <authorList>
            <person name="Trost M."/>
            <person name="English L."/>
            <person name="Lemieux S."/>
            <person name="Courcelles M."/>
            <person name="Desjardins M."/>
            <person name="Thibault P."/>
        </authorList>
    </citation>
    <scope>IDENTIFICATION BY MASS SPECTROMETRY [LARGE SCALE ANALYSIS]</scope>
</reference>
<reference key="8">
    <citation type="journal article" date="2010" name="Cell">
        <title>A tissue-specific atlas of mouse protein phosphorylation and expression.</title>
        <authorList>
            <person name="Huttlin E.L."/>
            <person name="Jedrychowski M.P."/>
            <person name="Elias J.E."/>
            <person name="Goswami T."/>
            <person name="Rad R."/>
            <person name="Beausoleil S.A."/>
            <person name="Villen J."/>
            <person name="Haas W."/>
            <person name="Sowa M.E."/>
            <person name="Gygi S.P."/>
        </authorList>
    </citation>
    <scope>PHOSPHORYLATION [LARGE SCALE ANALYSIS] AT SER-464 AND SER-469</scope>
    <scope>IDENTIFICATION BY MASS SPECTROMETRY [LARGE SCALE ANALYSIS]</scope>
    <source>
        <tissue>Brain</tissue>
        <tissue>Brown adipose tissue</tissue>
        <tissue>Heart</tissue>
        <tissue>Kidney</tissue>
        <tissue>Liver</tissue>
        <tissue>Lung</tissue>
        <tissue>Pancreas</tissue>
        <tissue>Spleen</tissue>
        <tissue>Testis</tissue>
    </source>
</reference>
<dbReference type="EMBL" id="U35846">
    <property type="protein sequence ID" value="AAB86526.1"/>
    <property type="molecule type" value="mRNA"/>
</dbReference>
<dbReference type="EMBL" id="AK137466">
    <property type="protein sequence ID" value="BAE23364.1"/>
    <property type="molecule type" value="mRNA"/>
</dbReference>
<dbReference type="EMBL" id="AK153934">
    <property type="protein sequence ID" value="BAE32263.1"/>
    <property type="molecule type" value="mRNA"/>
</dbReference>
<dbReference type="EMBL" id="AK167375">
    <property type="protein sequence ID" value="BAE39470.1"/>
    <property type="molecule type" value="mRNA"/>
</dbReference>
<dbReference type="EMBL" id="AL672251">
    <property type="status" value="NOT_ANNOTATED_CDS"/>
    <property type="molecule type" value="Genomic_DNA"/>
</dbReference>
<dbReference type="EMBL" id="CH466519">
    <property type="protein sequence ID" value="EDL27645.1"/>
    <property type="molecule type" value="Genomic_DNA"/>
</dbReference>
<dbReference type="EMBL" id="BC007133">
    <property type="protein sequence ID" value="AAH07133.1"/>
    <property type="molecule type" value="mRNA"/>
</dbReference>
<dbReference type="CCDS" id="CCDS16459.1"/>
<dbReference type="RefSeq" id="NP_031492.2">
    <property type="nucleotide sequence ID" value="NM_007466.4"/>
</dbReference>
<dbReference type="SMR" id="O35841"/>
<dbReference type="BioGRID" id="198151">
    <property type="interactions" value="14"/>
</dbReference>
<dbReference type="FunCoup" id="O35841">
    <property type="interactions" value="5669"/>
</dbReference>
<dbReference type="STRING" id="10090.ENSMUSP00000028617"/>
<dbReference type="GlyConnect" id="2132">
    <property type="glycosylation" value="1 N-Linked glycan (1 site)"/>
</dbReference>
<dbReference type="GlyCosmos" id="O35841">
    <property type="glycosylation" value="1 site, 1 glycan"/>
</dbReference>
<dbReference type="GlyGen" id="O35841">
    <property type="glycosylation" value="1 site, 1 O-linked glycan (1 site)"/>
</dbReference>
<dbReference type="iPTMnet" id="O35841"/>
<dbReference type="PhosphoSitePlus" id="O35841"/>
<dbReference type="SwissPalm" id="O35841"/>
<dbReference type="jPOST" id="O35841"/>
<dbReference type="PaxDb" id="10090-ENSMUSP00000028617"/>
<dbReference type="PeptideAtlas" id="O35841"/>
<dbReference type="ProteomicsDB" id="296373"/>
<dbReference type="Pumba" id="O35841"/>
<dbReference type="Antibodypedia" id="13145">
    <property type="antibodies" value="290 antibodies from 33 providers"/>
</dbReference>
<dbReference type="DNASU" id="11800"/>
<dbReference type="Ensembl" id="ENSMUST00000028617.7">
    <property type="protein sequence ID" value="ENSMUSP00000028617.7"/>
    <property type="gene ID" value="ENSMUSG00000027193.13"/>
</dbReference>
<dbReference type="GeneID" id="11800"/>
<dbReference type="KEGG" id="mmu:11800"/>
<dbReference type="UCSC" id="uc008lgx.2">
    <property type="organism name" value="mouse"/>
</dbReference>
<dbReference type="AGR" id="MGI:1888993"/>
<dbReference type="CTD" id="8539"/>
<dbReference type="MGI" id="MGI:1888993">
    <property type="gene designation" value="Api5"/>
</dbReference>
<dbReference type="VEuPathDB" id="HostDB:ENSMUSG00000027193"/>
<dbReference type="eggNOG" id="KOG2213">
    <property type="taxonomic scope" value="Eukaryota"/>
</dbReference>
<dbReference type="GeneTree" id="ENSGT00390000010991"/>
<dbReference type="HOGENOM" id="CLU_037809_1_0_1"/>
<dbReference type="InParanoid" id="O35841"/>
<dbReference type="OMA" id="RCIKFLA"/>
<dbReference type="OrthoDB" id="19224at2759"/>
<dbReference type="PhylomeDB" id="O35841"/>
<dbReference type="TreeFam" id="TF324283"/>
<dbReference type="BioGRID-ORCS" id="11800">
    <property type="hits" value="14 hits in 64 CRISPR screens"/>
</dbReference>
<dbReference type="ChiTaRS" id="Api5">
    <property type="organism name" value="mouse"/>
</dbReference>
<dbReference type="PRO" id="PR:O35841"/>
<dbReference type="Proteomes" id="UP000000589">
    <property type="component" value="Chromosome 2"/>
</dbReference>
<dbReference type="RNAct" id="O35841">
    <property type="molecule type" value="protein"/>
</dbReference>
<dbReference type="Bgee" id="ENSMUSG00000027193">
    <property type="expression patterns" value="Expressed in optic fissure and 258 other cell types or tissues"/>
</dbReference>
<dbReference type="GO" id="GO:0005737">
    <property type="term" value="C:cytoplasm"/>
    <property type="evidence" value="ECO:0007669"/>
    <property type="project" value="UniProtKB-SubCell"/>
</dbReference>
<dbReference type="GO" id="GO:0016607">
    <property type="term" value="C:nuclear speck"/>
    <property type="evidence" value="ECO:0007669"/>
    <property type="project" value="Ensembl"/>
</dbReference>
<dbReference type="GO" id="GO:0005681">
    <property type="term" value="C:spliceosomal complex"/>
    <property type="evidence" value="ECO:0000314"/>
    <property type="project" value="MGI"/>
</dbReference>
<dbReference type="GO" id="GO:0017134">
    <property type="term" value="F:fibroblast growth factor binding"/>
    <property type="evidence" value="ECO:0000250"/>
    <property type="project" value="UniProtKB"/>
</dbReference>
<dbReference type="GO" id="GO:0044346">
    <property type="term" value="P:fibroblast apoptotic process"/>
    <property type="evidence" value="ECO:0000314"/>
    <property type="project" value="MGI"/>
</dbReference>
<dbReference type="GO" id="GO:2000270">
    <property type="term" value="P:negative regulation of fibroblast apoptotic process"/>
    <property type="evidence" value="ECO:0000314"/>
    <property type="project" value="MGI"/>
</dbReference>
<dbReference type="FunFam" id="1.25.10.10:FF:000092">
    <property type="entry name" value="apoptosis inhibitor 5 isoform X2"/>
    <property type="match status" value="1"/>
</dbReference>
<dbReference type="Gene3D" id="1.25.10.10">
    <property type="entry name" value="Leucine-rich Repeat Variant"/>
    <property type="match status" value="1"/>
</dbReference>
<dbReference type="InterPro" id="IPR008383">
    <property type="entry name" value="API5"/>
</dbReference>
<dbReference type="InterPro" id="IPR011989">
    <property type="entry name" value="ARM-like"/>
</dbReference>
<dbReference type="InterPro" id="IPR016024">
    <property type="entry name" value="ARM-type_fold"/>
</dbReference>
<dbReference type="PANTHER" id="PTHR12758:SF19">
    <property type="entry name" value="APOPTOSIS INHIBITOR 5"/>
    <property type="match status" value="1"/>
</dbReference>
<dbReference type="PANTHER" id="PTHR12758">
    <property type="entry name" value="APOPTOSIS INHIBITOR 5-RELATED"/>
    <property type="match status" value="1"/>
</dbReference>
<dbReference type="Pfam" id="PF05918">
    <property type="entry name" value="API5"/>
    <property type="match status" value="1"/>
</dbReference>
<dbReference type="SUPFAM" id="SSF48371">
    <property type="entry name" value="ARM repeat"/>
    <property type="match status" value="1"/>
</dbReference>
<accession>O35841</accession>
<accession>Q3U517</accession>
<accession>Q922L2</accession>
<name>API5_MOUSE</name>
<feature type="chain" id="PRO_0000064635" description="Apoptosis inhibitor 5">
    <location>
        <begin position="1"/>
        <end position="504"/>
    </location>
</feature>
<feature type="region of interest" description="ARM-like and Heat-like helical repeats" evidence="1">
    <location>
        <begin position="1"/>
        <end position="360"/>
    </location>
</feature>
<feature type="region of interest" description="Leucine-zipper">
    <location>
        <begin position="370"/>
        <end position="391"/>
    </location>
</feature>
<feature type="region of interest" description="Disordered" evidence="3">
    <location>
        <begin position="452"/>
        <end position="504"/>
    </location>
</feature>
<feature type="short sequence motif" description="Nuclear localization signal" evidence="1">
    <location>
        <begin position="454"/>
        <end position="475"/>
    </location>
</feature>
<feature type="compositionally biased region" description="Low complexity" evidence="3">
    <location>
        <begin position="461"/>
        <end position="472"/>
    </location>
</feature>
<feature type="compositionally biased region" description="Polar residues" evidence="3">
    <location>
        <begin position="487"/>
        <end position="504"/>
    </location>
</feature>
<feature type="modified residue" description="N6-acetyllysine" evidence="2">
    <location>
        <position position="251"/>
    </location>
</feature>
<feature type="modified residue" description="Phosphothreonine" evidence="2">
    <location>
        <position position="399"/>
    </location>
</feature>
<feature type="modified residue" description="Phosphoserine" evidence="2">
    <location>
        <position position="462"/>
    </location>
</feature>
<feature type="modified residue" description="Phosphoserine" evidence="6">
    <location>
        <position position="464"/>
    </location>
</feature>
<feature type="modified residue" description="Phosphoserine" evidence="6">
    <location>
        <position position="469"/>
    </location>
</feature>
<feature type="sequence conflict" description="In Ref. 1; AAB86526." evidence="5" ref="1">
    <original>K</original>
    <variation>N</variation>
    <location>
        <position position="288"/>
    </location>
</feature>
<evidence type="ECO:0000250" key="1"/>
<evidence type="ECO:0000250" key="2">
    <source>
        <dbReference type="UniProtKB" id="Q9BZZ5"/>
    </source>
</evidence>
<evidence type="ECO:0000256" key="3">
    <source>
        <dbReference type="SAM" id="MobiDB-lite"/>
    </source>
</evidence>
<evidence type="ECO:0000269" key="4">
    <source>
    </source>
</evidence>
<evidence type="ECO:0000305" key="5"/>
<evidence type="ECO:0007744" key="6">
    <source>
    </source>
</evidence>
<proteinExistence type="evidence at protein level"/>
<protein>
    <recommendedName>
        <fullName>Apoptosis inhibitor 5</fullName>
        <shortName>API-5</shortName>
    </recommendedName>
    <alternativeName>
        <fullName>AAC-11</fullName>
    </alternativeName>
</protein>
<sequence>MPTVEELYRNYGILADATEQVGQHKDAYQVILDGVKGGTKEKRLAAQFIPKFFKHFPELADSAINAQLDLCEDEDVSIRRQAIKELPQFATGENLPRVADILTQLLQTDDSAEFNLVNNALLSIFKMDAKGTLGGLFSQILQGEDIVRERAIKFLSTKLKTLPDEVLTKEVEELILTESKKVLEDVTGEEFVLFMKILSGLKSLQTVSGRQQLVELVAEQADLEQAFSPSDPDCVDRLLQCTRQAVPLFSKNVHSTRFVTYFCEQVLPNLSTLTTPVEGLDIQLEVLKLLAEMSSFCGDMEKLETNLRKLFDKLLEYMPLPPEEAENGENAGNEEPKLQFSYVECLLYSFHQLGRKLPDFLTAKLNAEKLKDFKIRLQYFARGLQVYIRQLRLALQGKTGEALKTEENKIKVVALKITNNINVLIKDLFHIPPSYKSTVTLSWKPVQKVEIGQKRTSEDTSSGSPPKKSPGGPKRDARQIYNPPSGKYSSNLSNFNYERSLQGK</sequence>
<gene>
    <name type="primary">Api5</name>
</gene>
<comment type="function">
    <text evidence="1">Antiapoptotic factor that may have a role in protein assembly. Negatively regulates ACIN1. By binding to ACIN1, it suppresses ACIN1 cleavage from CASP3 and ACIN1-mediated DNA fragmentation. Also known to efficiently suppress E2F1-induced apoptosis (By similarity).</text>
</comment>
<comment type="subunit">
    <text evidence="1">Monomer. Interacts with FGF2 and ACIN1 (By similarity).</text>
</comment>
<comment type="subcellular location">
    <subcellularLocation>
        <location evidence="1">Nucleus</location>
    </subcellularLocation>
    <subcellularLocation>
        <location evidence="1">Cytoplasm</location>
    </subcellularLocation>
    <text>Mainly nuclear.</text>
</comment>
<comment type="induction">
    <text evidence="4">Down-regulated in vascular smooth muscle cells (vSMCs) treated with benzo[a]pyrene (BaP).</text>
</comment>
<comment type="PTM">
    <text evidence="1">Acetylation at Lys-251 impairs antiapoptotic function.</text>
</comment>
<comment type="similarity">
    <text evidence="5">Belongs to the API5 family.</text>
</comment>
<keyword id="KW-0007">Acetylation</keyword>
<keyword id="KW-0053">Apoptosis</keyword>
<keyword id="KW-0963">Cytoplasm</keyword>
<keyword id="KW-0539">Nucleus</keyword>
<keyword id="KW-0597">Phosphoprotein</keyword>
<keyword id="KW-1185">Reference proteome</keyword>
<keyword id="KW-0677">Repeat</keyword>